<evidence type="ECO:0000250" key="1"/>
<evidence type="ECO:0000250" key="2">
    <source>
        <dbReference type="UniProtKB" id="O48814"/>
    </source>
</evidence>
<evidence type="ECO:0000255" key="3"/>
<evidence type="ECO:0000255" key="4">
    <source>
        <dbReference type="PROSITE-ProRule" id="PRU00159"/>
    </source>
</evidence>
<evidence type="ECO:0000256" key="5">
    <source>
        <dbReference type="SAM" id="MobiDB-lite"/>
    </source>
</evidence>
<dbReference type="EC" id="2.7.11.1"/>
<dbReference type="EMBL" id="AC002392">
    <property type="protein sequence ID" value="AAM14837.1"/>
    <property type="molecule type" value="Genomic_DNA"/>
</dbReference>
<dbReference type="EMBL" id="AC003058">
    <property type="protein sequence ID" value="AAC16451.1"/>
    <property type="molecule type" value="Genomic_DNA"/>
</dbReference>
<dbReference type="EMBL" id="CP002685">
    <property type="protein sequence ID" value="AEC06857.1"/>
    <property type="molecule type" value="Genomic_DNA"/>
</dbReference>
<dbReference type="PIR" id="T01269">
    <property type="entry name" value="T01269"/>
</dbReference>
<dbReference type="RefSeq" id="NP_179511.1">
    <property type="nucleotide sequence ID" value="NM_127478.1"/>
</dbReference>
<dbReference type="SMR" id="O65924"/>
<dbReference type="BioGRID" id="1795">
    <property type="interactions" value="15"/>
</dbReference>
<dbReference type="FunCoup" id="O65924">
    <property type="interactions" value="184"/>
</dbReference>
<dbReference type="IntAct" id="O65924">
    <property type="interactions" value="16"/>
</dbReference>
<dbReference type="STRING" id="3702.O65924"/>
<dbReference type="GlyGen" id="O65924">
    <property type="glycosylation" value="9 sites"/>
</dbReference>
<dbReference type="PaxDb" id="3702-AT2G19210.1"/>
<dbReference type="ProteomicsDB" id="234593"/>
<dbReference type="EnsemblPlants" id="AT2G19210.1">
    <property type="protein sequence ID" value="AT2G19210.1"/>
    <property type="gene ID" value="AT2G19210"/>
</dbReference>
<dbReference type="GeneID" id="816438"/>
<dbReference type="Gramene" id="AT2G19210.1">
    <property type="protein sequence ID" value="AT2G19210.1"/>
    <property type="gene ID" value="AT2G19210"/>
</dbReference>
<dbReference type="KEGG" id="ath:AT2G19210"/>
<dbReference type="Araport" id="AT2G19210"/>
<dbReference type="TAIR" id="AT2G19210"/>
<dbReference type="eggNOG" id="ENOG502QQCZ">
    <property type="taxonomic scope" value="Eukaryota"/>
</dbReference>
<dbReference type="HOGENOM" id="CLU_000288_41_1_1"/>
<dbReference type="InParanoid" id="O65924"/>
<dbReference type="OMA" id="HIRINGE"/>
<dbReference type="PhylomeDB" id="O65924"/>
<dbReference type="PRO" id="PR:O65924"/>
<dbReference type="Proteomes" id="UP000006548">
    <property type="component" value="Chromosome 2"/>
</dbReference>
<dbReference type="ExpressionAtlas" id="O65924">
    <property type="expression patterns" value="baseline and differential"/>
</dbReference>
<dbReference type="GO" id="GO:0005886">
    <property type="term" value="C:plasma membrane"/>
    <property type="evidence" value="ECO:0007669"/>
    <property type="project" value="UniProtKB-SubCell"/>
</dbReference>
<dbReference type="GO" id="GO:0005524">
    <property type="term" value="F:ATP binding"/>
    <property type="evidence" value="ECO:0007669"/>
    <property type="project" value="UniProtKB-KW"/>
</dbReference>
<dbReference type="GO" id="GO:0106310">
    <property type="term" value="F:protein serine kinase activity"/>
    <property type="evidence" value="ECO:0007669"/>
    <property type="project" value="RHEA"/>
</dbReference>
<dbReference type="GO" id="GO:0004674">
    <property type="term" value="F:protein serine/threonine kinase activity"/>
    <property type="evidence" value="ECO:0007669"/>
    <property type="project" value="UniProtKB-KW"/>
</dbReference>
<dbReference type="CDD" id="cd14066">
    <property type="entry name" value="STKc_IRAK"/>
    <property type="match status" value="1"/>
</dbReference>
<dbReference type="FunFam" id="3.80.10.10:FF:000129">
    <property type="entry name" value="Leucine-rich repeat receptor-like kinase"/>
    <property type="match status" value="1"/>
</dbReference>
<dbReference type="FunFam" id="3.30.200.20:FF:000394">
    <property type="entry name" value="Leucine-rich repeat receptor-like protein kinase"/>
    <property type="match status" value="1"/>
</dbReference>
<dbReference type="FunFam" id="1.10.510.10:FF:000146">
    <property type="entry name" value="LRR receptor-like serine/threonine-protein kinase IOS1"/>
    <property type="match status" value="1"/>
</dbReference>
<dbReference type="Gene3D" id="3.30.200.20">
    <property type="entry name" value="Phosphorylase Kinase, domain 1"/>
    <property type="match status" value="1"/>
</dbReference>
<dbReference type="Gene3D" id="3.80.10.10">
    <property type="entry name" value="Ribonuclease Inhibitor"/>
    <property type="match status" value="1"/>
</dbReference>
<dbReference type="Gene3D" id="1.10.510.10">
    <property type="entry name" value="Transferase(Phosphotransferase) domain 1"/>
    <property type="match status" value="1"/>
</dbReference>
<dbReference type="InterPro" id="IPR011009">
    <property type="entry name" value="Kinase-like_dom_sf"/>
</dbReference>
<dbReference type="InterPro" id="IPR001611">
    <property type="entry name" value="Leu-rich_rpt"/>
</dbReference>
<dbReference type="InterPro" id="IPR032675">
    <property type="entry name" value="LRR_dom_sf"/>
</dbReference>
<dbReference type="InterPro" id="IPR024788">
    <property type="entry name" value="Malectin-like_Carb-bd_dom"/>
</dbReference>
<dbReference type="InterPro" id="IPR000719">
    <property type="entry name" value="Prot_kinase_dom"/>
</dbReference>
<dbReference type="InterPro" id="IPR017441">
    <property type="entry name" value="Protein_kinase_ATP_BS"/>
</dbReference>
<dbReference type="InterPro" id="IPR001245">
    <property type="entry name" value="Ser-Thr/Tyr_kinase_cat_dom"/>
</dbReference>
<dbReference type="PANTHER" id="PTHR45631">
    <property type="entry name" value="OS07G0107800 PROTEIN-RELATED"/>
    <property type="match status" value="1"/>
</dbReference>
<dbReference type="PANTHER" id="PTHR45631:SF160">
    <property type="entry name" value="PROTEIN KINASE DOMAIN-CONTAINING PROTEIN"/>
    <property type="match status" value="1"/>
</dbReference>
<dbReference type="Pfam" id="PF13855">
    <property type="entry name" value="LRR_8"/>
    <property type="match status" value="1"/>
</dbReference>
<dbReference type="Pfam" id="PF12819">
    <property type="entry name" value="Malectin_like"/>
    <property type="match status" value="1"/>
</dbReference>
<dbReference type="Pfam" id="PF07714">
    <property type="entry name" value="PK_Tyr_Ser-Thr"/>
    <property type="match status" value="1"/>
</dbReference>
<dbReference type="SMART" id="SM00220">
    <property type="entry name" value="S_TKc"/>
    <property type="match status" value="1"/>
</dbReference>
<dbReference type="SUPFAM" id="SSF52058">
    <property type="entry name" value="L domain-like"/>
    <property type="match status" value="1"/>
</dbReference>
<dbReference type="SUPFAM" id="SSF56112">
    <property type="entry name" value="Protein kinase-like (PK-like)"/>
    <property type="match status" value="1"/>
</dbReference>
<dbReference type="PROSITE" id="PS00107">
    <property type="entry name" value="PROTEIN_KINASE_ATP"/>
    <property type="match status" value="1"/>
</dbReference>
<dbReference type="PROSITE" id="PS50011">
    <property type="entry name" value="PROTEIN_KINASE_DOM"/>
    <property type="match status" value="1"/>
</dbReference>
<gene>
    <name type="ordered locus">At2g19210</name>
    <name type="ORF">F27F23.1</name>
</gene>
<comment type="catalytic activity">
    <reaction>
        <text>L-seryl-[protein] + ATP = O-phospho-L-seryl-[protein] + ADP + H(+)</text>
        <dbReference type="Rhea" id="RHEA:17989"/>
        <dbReference type="Rhea" id="RHEA-COMP:9863"/>
        <dbReference type="Rhea" id="RHEA-COMP:11604"/>
        <dbReference type="ChEBI" id="CHEBI:15378"/>
        <dbReference type="ChEBI" id="CHEBI:29999"/>
        <dbReference type="ChEBI" id="CHEBI:30616"/>
        <dbReference type="ChEBI" id="CHEBI:83421"/>
        <dbReference type="ChEBI" id="CHEBI:456216"/>
        <dbReference type="EC" id="2.7.11.1"/>
    </reaction>
</comment>
<comment type="catalytic activity">
    <reaction>
        <text>L-threonyl-[protein] + ATP = O-phospho-L-threonyl-[protein] + ADP + H(+)</text>
        <dbReference type="Rhea" id="RHEA:46608"/>
        <dbReference type="Rhea" id="RHEA-COMP:11060"/>
        <dbReference type="Rhea" id="RHEA-COMP:11605"/>
        <dbReference type="ChEBI" id="CHEBI:15378"/>
        <dbReference type="ChEBI" id="CHEBI:30013"/>
        <dbReference type="ChEBI" id="CHEBI:30616"/>
        <dbReference type="ChEBI" id="CHEBI:61977"/>
        <dbReference type="ChEBI" id="CHEBI:456216"/>
        <dbReference type="EC" id="2.7.11.1"/>
    </reaction>
</comment>
<comment type="interaction">
    <interactant intactId="EBI-20662256">
        <id>O65924</id>
    </interactant>
    <interactant intactId="EBI-16146189">
        <id>Q9LFS4</id>
        <label>NIK1</label>
    </interactant>
    <organismsDiffer>false</organismsDiffer>
    <experiments>3</experiments>
</comment>
<comment type="subcellular location">
    <subcellularLocation>
        <location evidence="1">Cell membrane</location>
        <topology evidence="1">Single-pass type I membrane protein</topology>
    </subcellularLocation>
</comment>
<comment type="similarity">
    <text evidence="4">Belongs to the protein kinase superfamily. Ser/Thr protein kinase family.</text>
</comment>
<proteinExistence type="evidence at protein level"/>
<keyword id="KW-0067">ATP-binding</keyword>
<keyword id="KW-1003">Cell membrane</keyword>
<keyword id="KW-0325">Glycoprotein</keyword>
<keyword id="KW-0418">Kinase</keyword>
<keyword id="KW-0433">Leucine-rich repeat</keyword>
<keyword id="KW-0472">Membrane</keyword>
<keyword id="KW-0547">Nucleotide-binding</keyword>
<keyword id="KW-0597">Phosphoprotein</keyword>
<keyword id="KW-0675">Receptor</keyword>
<keyword id="KW-1185">Reference proteome</keyword>
<keyword id="KW-0677">Repeat</keyword>
<keyword id="KW-0723">Serine/threonine-protein kinase</keyword>
<keyword id="KW-0732">Signal</keyword>
<keyword id="KW-0808">Transferase</keyword>
<keyword id="KW-0812">Transmembrane</keyword>
<keyword id="KW-1133">Transmembrane helix</keyword>
<sequence>MVHYNFLSLIIFACFFAVFVLLVRAQDQSGFVSIDCGIPEDSSYNDETTDIKYVSDAAFVESGTIHSIDPEFQTSSLEKQFQNVRSFPEGNRNCYDVKPPQGKGFKYLIRTRFMYGNYDNLGKAPDFDLYLGFNIWDSVTIDNATTIVTKEIIHTLRSDHVHVCLVDKNRGTPFLSALEIRLLKSNTYETPYDSLILFKRWDLGGLGALPVRYKDDVFDRIWIPLRFPKYTIFNASLTIDSNNNEGFQPARFVMNTATSPEDLSQDIIFSWEPKDPTWKYFVYMHFAEVVELPSNETREFKVLLNEKEINMSSFSPRYLYTDTLFVQNPVSGPKLEFRLQQTPRSTLPPIINAIETYRVNEFLQSPTDQQDVDAIMRIKSKYGVKKSWLGDPCAPVKYPWKDINCSYVDNESPRIISVNLSSSGLTGEIDAAFSNLTLLHILDLSNNSLTGKIPDFLGNLHNLTELNLEGNKLSGAIPVKLLERSNKKLILLRIDGNPDLCVSASCQISDEKTKKNVYIIPLVASVVGVLGLVLAIALFLLYKKRHRRGGSGGVRAGPLDTTKRYYKYSEVVKVTNNFERVLGQGGFGKVYHGVLNDDQVAVKILSESSAQGYKEFRAEVELLLRVHHKNLTALIGYCHEGKKMALIYEFMANGTLGDYLSGEKSYVLSWEERLQISLDAAQGLEYLHNGCKPPIVQRDVKPANILINEKLQAKIADFGLSRSVALDGNNQDTTAVAGTIGYLDPEYHLTQKLSEKSDIYSFGVVLLEVVSGQPVIARSRTTAENIHITDRVDLMLSTGDIRGIVDPKLGERFDAGSAWKITEVAMACASSSSKNRPTMSHVVAELKESVSRARAGGGSGASSVTDPAMTNFDSGMFPQAR</sequence>
<protein>
    <recommendedName>
        <fullName>Putative leucine-rich repeat receptor-like protein kinase At2g19210</fullName>
        <ecNumber>2.7.11.1</ecNumber>
    </recommendedName>
</protein>
<name>Y2921_ARATH</name>
<organism>
    <name type="scientific">Arabidopsis thaliana</name>
    <name type="common">Mouse-ear cress</name>
    <dbReference type="NCBI Taxonomy" id="3702"/>
    <lineage>
        <taxon>Eukaryota</taxon>
        <taxon>Viridiplantae</taxon>
        <taxon>Streptophyta</taxon>
        <taxon>Embryophyta</taxon>
        <taxon>Tracheophyta</taxon>
        <taxon>Spermatophyta</taxon>
        <taxon>Magnoliopsida</taxon>
        <taxon>eudicotyledons</taxon>
        <taxon>Gunneridae</taxon>
        <taxon>Pentapetalae</taxon>
        <taxon>rosids</taxon>
        <taxon>malvids</taxon>
        <taxon>Brassicales</taxon>
        <taxon>Brassicaceae</taxon>
        <taxon>Camelineae</taxon>
        <taxon>Arabidopsis</taxon>
    </lineage>
</organism>
<feature type="signal peptide" evidence="3">
    <location>
        <begin position="1"/>
        <end position="25"/>
    </location>
</feature>
<feature type="chain" id="PRO_0000401335" description="Putative leucine-rich repeat receptor-like protein kinase At2g19210">
    <location>
        <begin position="26"/>
        <end position="881"/>
    </location>
</feature>
<feature type="topological domain" description="Extracellular" evidence="3">
    <location>
        <begin position="26"/>
        <end position="518"/>
    </location>
</feature>
<feature type="transmembrane region" description="Helical" evidence="3">
    <location>
        <begin position="519"/>
        <end position="539"/>
    </location>
</feature>
<feature type="topological domain" description="Cytoplasmic" evidence="3">
    <location>
        <begin position="540"/>
        <end position="881"/>
    </location>
</feature>
<feature type="repeat" description="LRR 1">
    <location>
        <begin position="438"/>
        <end position="460"/>
    </location>
</feature>
<feature type="repeat" description="LRR 2">
    <location>
        <begin position="462"/>
        <end position="483"/>
    </location>
</feature>
<feature type="domain" description="Protein kinase" evidence="4">
    <location>
        <begin position="576"/>
        <end position="850"/>
    </location>
</feature>
<feature type="region of interest" description="Disordered" evidence="5">
    <location>
        <begin position="851"/>
        <end position="881"/>
    </location>
</feature>
<feature type="active site" description="Proton acceptor" evidence="4">
    <location>
        <position position="699"/>
    </location>
</feature>
<feature type="binding site" evidence="4">
    <location>
        <begin position="582"/>
        <end position="590"/>
    </location>
    <ligand>
        <name>ATP</name>
        <dbReference type="ChEBI" id="CHEBI:30616"/>
    </ligand>
</feature>
<feature type="binding site" evidence="4">
    <location>
        <position position="603"/>
    </location>
    <ligand>
        <name>ATP</name>
        <dbReference type="ChEBI" id="CHEBI:30616"/>
    </ligand>
</feature>
<feature type="modified residue" description="Phosphotyrosine" evidence="2">
    <location>
        <position position="648"/>
    </location>
</feature>
<feature type="modified residue" description="Phosphothreonine" evidence="2">
    <location>
        <position position="734"/>
    </location>
</feature>
<feature type="modified residue" description="Phosphothreonine" evidence="2">
    <location>
        <position position="739"/>
    </location>
</feature>
<feature type="modified residue" description="Phosphotyrosine" evidence="2">
    <location>
        <position position="747"/>
    </location>
</feature>
<feature type="glycosylation site" description="N-linked (GlcNAc...) asparagine" evidence="3">
    <location>
        <position position="143"/>
    </location>
</feature>
<feature type="glycosylation site" description="N-linked (GlcNAc...) asparagine" evidence="3">
    <location>
        <position position="234"/>
    </location>
</feature>
<feature type="glycosylation site" description="N-linked (GlcNAc...) asparagine" evidence="3">
    <location>
        <position position="295"/>
    </location>
</feature>
<feature type="glycosylation site" description="N-linked (GlcNAc...) asparagine" evidence="3">
    <location>
        <position position="310"/>
    </location>
</feature>
<feature type="glycosylation site" description="N-linked (GlcNAc...) asparagine" evidence="3">
    <location>
        <position position="404"/>
    </location>
</feature>
<feature type="glycosylation site" description="N-linked (GlcNAc...) asparagine" evidence="3">
    <location>
        <position position="419"/>
    </location>
</feature>
<feature type="glycosylation site" description="N-linked (GlcNAc...) asparagine" evidence="3">
    <location>
        <position position="435"/>
    </location>
</feature>
<feature type="glycosylation site" description="N-linked (GlcNAc...) asparagine" evidence="3">
    <location>
        <position position="446"/>
    </location>
</feature>
<feature type="glycosylation site" description="N-linked (GlcNAc...) asparagine" evidence="3">
    <location>
        <position position="462"/>
    </location>
</feature>
<reference key="1">
    <citation type="journal article" date="1999" name="Nature">
        <title>Sequence and analysis of chromosome 2 of the plant Arabidopsis thaliana.</title>
        <authorList>
            <person name="Lin X."/>
            <person name="Kaul S."/>
            <person name="Rounsley S.D."/>
            <person name="Shea T.P."/>
            <person name="Benito M.-I."/>
            <person name="Town C.D."/>
            <person name="Fujii C.Y."/>
            <person name="Mason T.M."/>
            <person name="Bowman C.L."/>
            <person name="Barnstead M.E."/>
            <person name="Feldblyum T.V."/>
            <person name="Buell C.R."/>
            <person name="Ketchum K.A."/>
            <person name="Lee J.J."/>
            <person name="Ronning C.M."/>
            <person name="Koo H.L."/>
            <person name="Moffat K.S."/>
            <person name="Cronin L.A."/>
            <person name="Shen M."/>
            <person name="Pai G."/>
            <person name="Van Aken S."/>
            <person name="Umayam L."/>
            <person name="Tallon L.J."/>
            <person name="Gill J.E."/>
            <person name="Adams M.D."/>
            <person name="Carrera A.J."/>
            <person name="Creasy T.H."/>
            <person name="Goodman H.M."/>
            <person name="Somerville C.R."/>
            <person name="Copenhaver G.P."/>
            <person name="Preuss D."/>
            <person name="Nierman W.C."/>
            <person name="White O."/>
            <person name="Eisen J.A."/>
            <person name="Salzberg S.L."/>
            <person name="Fraser C.M."/>
            <person name="Venter J.C."/>
        </authorList>
    </citation>
    <scope>NUCLEOTIDE SEQUENCE [LARGE SCALE GENOMIC DNA]</scope>
    <source>
        <strain>cv. Columbia</strain>
    </source>
</reference>
<reference key="2">
    <citation type="journal article" date="2017" name="Plant J.">
        <title>Araport11: a complete reannotation of the Arabidopsis thaliana reference genome.</title>
        <authorList>
            <person name="Cheng C.Y."/>
            <person name="Krishnakumar V."/>
            <person name="Chan A.P."/>
            <person name="Thibaud-Nissen F."/>
            <person name="Schobel S."/>
            <person name="Town C.D."/>
        </authorList>
    </citation>
    <scope>GENOME REANNOTATION</scope>
    <source>
        <strain>cv. Columbia</strain>
    </source>
</reference>
<accession>O65924</accession>